<organism>
    <name type="scientific">Rickettsia rickettsii (strain Sheila Smith)</name>
    <dbReference type="NCBI Taxonomy" id="392021"/>
    <lineage>
        <taxon>Bacteria</taxon>
        <taxon>Pseudomonadati</taxon>
        <taxon>Pseudomonadota</taxon>
        <taxon>Alphaproteobacteria</taxon>
        <taxon>Rickettsiales</taxon>
        <taxon>Rickettsiaceae</taxon>
        <taxon>Rickettsieae</taxon>
        <taxon>Rickettsia</taxon>
        <taxon>spotted fever group</taxon>
    </lineage>
</organism>
<keyword id="KW-0687">Ribonucleoprotein</keyword>
<keyword id="KW-0689">Ribosomal protein</keyword>
<keyword id="KW-0694">RNA-binding</keyword>
<keyword id="KW-0699">rRNA-binding</keyword>
<dbReference type="EMBL" id="CP000848">
    <property type="protein sequence ID" value="ABV76589.1"/>
    <property type="molecule type" value="Genomic_DNA"/>
</dbReference>
<dbReference type="RefSeq" id="WP_004997796.1">
    <property type="nucleotide sequence ID" value="NC_009882.1"/>
</dbReference>
<dbReference type="SMR" id="A8GT64"/>
<dbReference type="GeneID" id="79937665"/>
<dbReference type="GeneID" id="95361481"/>
<dbReference type="KEGG" id="rri:A1G_05530"/>
<dbReference type="HOGENOM" id="CLU_083987_3_0_5"/>
<dbReference type="Proteomes" id="UP000006832">
    <property type="component" value="Chromosome"/>
</dbReference>
<dbReference type="GO" id="GO:0022625">
    <property type="term" value="C:cytosolic large ribosomal subunit"/>
    <property type="evidence" value="ECO:0007669"/>
    <property type="project" value="TreeGrafter"/>
</dbReference>
<dbReference type="GO" id="GO:0019843">
    <property type="term" value="F:rRNA binding"/>
    <property type="evidence" value="ECO:0007669"/>
    <property type="project" value="UniProtKB-UniRule"/>
</dbReference>
<dbReference type="GO" id="GO:0003735">
    <property type="term" value="F:structural constituent of ribosome"/>
    <property type="evidence" value="ECO:0007669"/>
    <property type="project" value="InterPro"/>
</dbReference>
<dbReference type="GO" id="GO:0006412">
    <property type="term" value="P:translation"/>
    <property type="evidence" value="ECO:0007669"/>
    <property type="project" value="UniProtKB-UniRule"/>
</dbReference>
<dbReference type="CDD" id="cd00336">
    <property type="entry name" value="Ribosomal_L22"/>
    <property type="match status" value="1"/>
</dbReference>
<dbReference type="Gene3D" id="3.90.470.10">
    <property type="entry name" value="Ribosomal protein L22/L17"/>
    <property type="match status" value="1"/>
</dbReference>
<dbReference type="HAMAP" id="MF_01331_B">
    <property type="entry name" value="Ribosomal_uL22_B"/>
    <property type="match status" value="1"/>
</dbReference>
<dbReference type="InterPro" id="IPR001063">
    <property type="entry name" value="Ribosomal_uL22"/>
</dbReference>
<dbReference type="InterPro" id="IPR005727">
    <property type="entry name" value="Ribosomal_uL22_bac/chlpt-type"/>
</dbReference>
<dbReference type="InterPro" id="IPR047867">
    <property type="entry name" value="Ribosomal_uL22_bac/org-type"/>
</dbReference>
<dbReference type="InterPro" id="IPR018260">
    <property type="entry name" value="Ribosomal_uL22_CS"/>
</dbReference>
<dbReference type="InterPro" id="IPR036394">
    <property type="entry name" value="Ribosomal_uL22_sf"/>
</dbReference>
<dbReference type="NCBIfam" id="TIGR01044">
    <property type="entry name" value="rplV_bact"/>
    <property type="match status" value="1"/>
</dbReference>
<dbReference type="PANTHER" id="PTHR13501">
    <property type="entry name" value="CHLOROPLAST 50S RIBOSOMAL PROTEIN L22-RELATED"/>
    <property type="match status" value="1"/>
</dbReference>
<dbReference type="PANTHER" id="PTHR13501:SF8">
    <property type="entry name" value="LARGE RIBOSOMAL SUBUNIT PROTEIN UL22M"/>
    <property type="match status" value="1"/>
</dbReference>
<dbReference type="Pfam" id="PF00237">
    <property type="entry name" value="Ribosomal_L22"/>
    <property type="match status" value="1"/>
</dbReference>
<dbReference type="SUPFAM" id="SSF54843">
    <property type="entry name" value="Ribosomal protein L22"/>
    <property type="match status" value="1"/>
</dbReference>
<dbReference type="PROSITE" id="PS00464">
    <property type="entry name" value="RIBOSOMAL_L22"/>
    <property type="match status" value="1"/>
</dbReference>
<feature type="chain" id="PRO_1000052640" description="Large ribosomal subunit protein uL22">
    <location>
        <begin position="1"/>
        <end position="119"/>
    </location>
</feature>
<protein>
    <recommendedName>
        <fullName evidence="1">Large ribosomal subunit protein uL22</fullName>
    </recommendedName>
    <alternativeName>
        <fullName evidence="2">50S ribosomal protein L22</fullName>
    </alternativeName>
</protein>
<gene>
    <name evidence="1" type="primary">rplV</name>
    <name type="ordered locus">A1G_05530</name>
</gene>
<proteinExistence type="inferred from homology"/>
<reference key="1">
    <citation type="submission" date="2007-09" db="EMBL/GenBank/DDBJ databases">
        <title>Complete genome sequence of Rickettsia rickettsii.</title>
        <authorList>
            <person name="Madan A."/>
            <person name="Fahey J."/>
            <person name="Helton E."/>
            <person name="Ketteman M."/>
            <person name="Madan A."/>
            <person name="Rodrigues S."/>
            <person name="Sanchez A."/>
            <person name="Dasch G."/>
            <person name="Eremeeva M."/>
        </authorList>
    </citation>
    <scope>NUCLEOTIDE SEQUENCE [LARGE SCALE GENOMIC DNA]</scope>
    <source>
        <strain>Sheila Smith</strain>
    </source>
</reference>
<comment type="function">
    <text evidence="1">This protein binds specifically to 23S rRNA; its binding is stimulated by other ribosomal proteins, e.g. L4, L17, and L20. It is important during the early stages of 50S assembly. It makes multiple contacts with different domains of the 23S rRNA in the assembled 50S subunit and ribosome (By similarity).</text>
</comment>
<comment type="function">
    <text evidence="1">The globular domain of the protein is located near the polypeptide exit tunnel on the outside of the subunit, while an extended beta-hairpin is found that lines the wall of the exit tunnel in the center of the 70S ribosome.</text>
</comment>
<comment type="subunit">
    <text evidence="1">Part of the 50S ribosomal subunit.</text>
</comment>
<comment type="similarity">
    <text evidence="1">Belongs to the universal ribosomal protein uL22 family.</text>
</comment>
<evidence type="ECO:0000255" key="1">
    <source>
        <dbReference type="HAMAP-Rule" id="MF_01331"/>
    </source>
</evidence>
<evidence type="ECO:0000305" key="2"/>
<sequence>MVQENKNFATAQAKSIRVSSRKLNLVAAFIRNMKVSEALVQLTFSPKRIAKVVKDCLQSAVANAENNLGLDIDRLVITKATVGKALVMKRVMPRAKGRATRINKFFSNLYITVTEKEDN</sequence>
<name>RL22_RICRS</name>
<accession>A8GT64</accession>